<dbReference type="EMBL" id="AE009951">
    <property type="status" value="NOT_ANNOTATED_CDS"/>
    <property type="molecule type" value="Genomic_DNA"/>
</dbReference>
<dbReference type="RefSeq" id="WP_005896200.1">
    <property type="nucleotide sequence ID" value="NZ_OZ209243.1"/>
</dbReference>
<dbReference type="SMR" id="P68994"/>
<dbReference type="FunCoup" id="P68994">
    <property type="interactions" value="108"/>
</dbReference>
<dbReference type="GeneID" id="93328132"/>
<dbReference type="InParanoid" id="P68994"/>
<dbReference type="Proteomes" id="UP000002521">
    <property type="component" value="Chromosome"/>
</dbReference>
<dbReference type="GO" id="GO:0005737">
    <property type="term" value="C:cytoplasm"/>
    <property type="evidence" value="ECO:0007669"/>
    <property type="project" value="UniProtKB-ARBA"/>
</dbReference>
<dbReference type="GO" id="GO:1990904">
    <property type="term" value="C:ribonucleoprotein complex"/>
    <property type="evidence" value="ECO:0007669"/>
    <property type="project" value="UniProtKB-KW"/>
</dbReference>
<dbReference type="GO" id="GO:0005840">
    <property type="term" value="C:ribosome"/>
    <property type="evidence" value="ECO:0007669"/>
    <property type="project" value="UniProtKB-KW"/>
</dbReference>
<dbReference type="GO" id="GO:0003735">
    <property type="term" value="F:structural constituent of ribosome"/>
    <property type="evidence" value="ECO:0007669"/>
    <property type="project" value="InterPro"/>
</dbReference>
<dbReference type="GO" id="GO:0006412">
    <property type="term" value="P:translation"/>
    <property type="evidence" value="ECO:0007669"/>
    <property type="project" value="UniProtKB-UniRule"/>
</dbReference>
<dbReference type="HAMAP" id="MF_00251">
    <property type="entry name" value="Ribosomal_bL36"/>
    <property type="match status" value="1"/>
</dbReference>
<dbReference type="InterPro" id="IPR000473">
    <property type="entry name" value="Ribosomal_bL36"/>
</dbReference>
<dbReference type="InterPro" id="IPR035977">
    <property type="entry name" value="Ribosomal_bL36_sp"/>
</dbReference>
<dbReference type="NCBIfam" id="TIGR01022">
    <property type="entry name" value="rpmJ_bact"/>
    <property type="match status" value="1"/>
</dbReference>
<dbReference type="PANTHER" id="PTHR42888">
    <property type="entry name" value="50S RIBOSOMAL PROTEIN L36, CHLOROPLASTIC"/>
    <property type="match status" value="1"/>
</dbReference>
<dbReference type="PANTHER" id="PTHR42888:SF1">
    <property type="entry name" value="LARGE RIBOSOMAL SUBUNIT PROTEIN BL36C"/>
    <property type="match status" value="1"/>
</dbReference>
<dbReference type="Pfam" id="PF00444">
    <property type="entry name" value="Ribosomal_L36"/>
    <property type="match status" value="1"/>
</dbReference>
<dbReference type="SUPFAM" id="SSF57840">
    <property type="entry name" value="Ribosomal protein L36"/>
    <property type="match status" value="1"/>
</dbReference>
<dbReference type="PROSITE" id="PS00828">
    <property type="entry name" value="RIBOSOMAL_L36"/>
    <property type="match status" value="1"/>
</dbReference>
<accession>P68994</accession>
<reference key="1">
    <citation type="journal article" date="2002" name="J. Bacteriol.">
        <title>Genome sequence and analysis of the oral bacterium Fusobacterium nucleatum strain ATCC 25586.</title>
        <authorList>
            <person name="Kapatral V."/>
            <person name="Anderson I."/>
            <person name="Ivanova N."/>
            <person name="Reznik G."/>
            <person name="Los T."/>
            <person name="Lykidis A."/>
            <person name="Bhattacharyya A."/>
            <person name="Bartman A."/>
            <person name="Gardner W."/>
            <person name="Grechkin G."/>
            <person name="Zhu L."/>
            <person name="Vasieva O."/>
            <person name="Chu L."/>
            <person name="Kogan Y."/>
            <person name="Chaga O."/>
            <person name="Goltsman E."/>
            <person name="Bernal A."/>
            <person name="Larsen N."/>
            <person name="D'Souza M."/>
            <person name="Walunas T."/>
            <person name="Pusch G."/>
            <person name="Haselkorn R."/>
            <person name="Fonstein M."/>
            <person name="Kyrpides N.C."/>
            <person name="Overbeek R."/>
        </authorList>
    </citation>
    <scope>NUCLEOTIDE SEQUENCE [LARGE SCALE GENOMIC DNA]</scope>
    <source>
        <strain>ATCC 25586 / DSM 15643 / BCRC 10681 / CIP 101130 / JCM 8532 / KCTC 2640 / LMG 13131 / VPI 4355</strain>
    </source>
</reference>
<reference key="2">
    <citation type="journal article" date="2005" name="Bioinformatics">
        <title>Improving genome annotations using phylogenetic profile anomaly detection.</title>
        <authorList>
            <person name="Mikkelsen T.S."/>
            <person name="Galagan J.E."/>
            <person name="Mesirov J.P."/>
        </authorList>
    </citation>
    <scope>IDENTIFICATION</scope>
</reference>
<protein>
    <recommendedName>
        <fullName evidence="1">Large ribosomal subunit protein bL36</fullName>
    </recommendedName>
    <alternativeName>
        <fullName>50S ribosomal protein L36</fullName>
    </alternativeName>
    <alternativeName>
        <fullName>Ribosomal protein B</fullName>
    </alternativeName>
</protein>
<proteinExistence type="inferred from homology"/>
<evidence type="ECO:0000305" key="1"/>
<sequence length="37" mass="4312">MKVRVSIKPICDKCKIIKRHGKIRVICENPKHKQVQG</sequence>
<comment type="similarity">
    <text evidence="1">Belongs to the bacterial ribosomal protein bL36 family.</text>
</comment>
<keyword id="KW-1185">Reference proteome</keyword>
<keyword id="KW-0687">Ribonucleoprotein</keyword>
<keyword id="KW-0689">Ribosomal protein</keyword>
<gene>
    <name type="primary">rpmJ</name>
    <name type="ordered locus">FN1286.1</name>
</gene>
<feature type="chain" id="PRO_0000126189" description="Large ribosomal subunit protein bL36">
    <location>
        <begin position="1"/>
        <end position="37"/>
    </location>
</feature>
<name>RL36_FUSNN</name>
<organism>
    <name type="scientific">Fusobacterium nucleatum subsp. nucleatum (strain ATCC 25586 / DSM 15643 / BCRC 10681 / CIP 101130 / JCM 8532 / KCTC 2640 / LMG 13131 / VPI 4355)</name>
    <dbReference type="NCBI Taxonomy" id="190304"/>
    <lineage>
        <taxon>Bacteria</taxon>
        <taxon>Fusobacteriati</taxon>
        <taxon>Fusobacteriota</taxon>
        <taxon>Fusobacteriia</taxon>
        <taxon>Fusobacteriales</taxon>
        <taxon>Fusobacteriaceae</taxon>
        <taxon>Fusobacterium</taxon>
    </lineage>
</organism>